<sequence>MEKNQKEIEKELEELRKREKELEEKIQKLETIAKNSNLRVAELQREIDYLKERYRRDLEEQRKFCYEKFAYDLLEVMDNFERALEYGRQAQDVKSILLGIEMIYSEMKKIFEKYGIREIPVEGKEFDPYVAEAVEKVETDQYPPNTVVKVIRKGYYIHDKVLRPARVAVAVPPQEEEGEEIT</sequence>
<dbReference type="EMBL" id="AE000657">
    <property type="protein sequence ID" value="AAC06707.1"/>
    <property type="molecule type" value="Genomic_DNA"/>
</dbReference>
<dbReference type="PIR" id="E70339">
    <property type="entry name" value="E70339"/>
</dbReference>
<dbReference type="RefSeq" id="NP_213305.1">
    <property type="nucleotide sequence ID" value="NC_000918.1"/>
</dbReference>
<dbReference type="RefSeq" id="WP_010880243.1">
    <property type="nucleotide sequence ID" value="NC_000918.1"/>
</dbReference>
<dbReference type="SMR" id="O66745"/>
<dbReference type="FunCoup" id="O66745">
    <property type="interactions" value="402"/>
</dbReference>
<dbReference type="STRING" id="224324.aq_433"/>
<dbReference type="EnsemblBacteria" id="AAC06707">
    <property type="protein sequence ID" value="AAC06707"/>
    <property type="gene ID" value="aq_433"/>
</dbReference>
<dbReference type="KEGG" id="aae:aq_433"/>
<dbReference type="PATRIC" id="fig|224324.8.peg.358"/>
<dbReference type="eggNOG" id="COG0576">
    <property type="taxonomic scope" value="Bacteria"/>
</dbReference>
<dbReference type="HOGENOM" id="CLU_057217_5_2_0"/>
<dbReference type="InParanoid" id="O66745"/>
<dbReference type="OrthoDB" id="9812586at2"/>
<dbReference type="Proteomes" id="UP000000798">
    <property type="component" value="Chromosome"/>
</dbReference>
<dbReference type="GO" id="GO:0005737">
    <property type="term" value="C:cytoplasm"/>
    <property type="evidence" value="ECO:0007669"/>
    <property type="project" value="UniProtKB-SubCell"/>
</dbReference>
<dbReference type="GO" id="GO:0000774">
    <property type="term" value="F:adenyl-nucleotide exchange factor activity"/>
    <property type="evidence" value="ECO:0000318"/>
    <property type="project" value="GO_Central"/>
</dbReference>
<dbReference type="GO" id="GO:0042803">
    <property type="term" value="F:protein homodimerization activity"/>
    <property type="evidence" value="ECO:0007669"/>
    <property type="project" value="InterPro"/>
</dbReference>
<dbReference type="GO" id="GO:0051087">
    <property type="term" value="F:protein-folding chaperone binding"/>
    <property type="evidence" value="ECO:0007669"/>
    <property type="project" value="InterPro"/>
</dbReference>
<dbReference type="GO" id="GO:0051082">
    <property type="term" value="F:unfolded protein binding"/>
    <property type="evidence" value="ECO:0000318"/>
    <property type="project" value="GO_Central"/>
</dbReference>
<dbReference type="GO" id="GO:0006457">
    <property type="term" value="P:protein folding"/>
    <property type="evidence" value="ECO:0007669"/>
    <property type="project" value="InterPro"/>
</dbReference>
<dbReference type="CDD" id="cd00446">
    <property type="entry name" value="GrpE"/>
    <property type="match status" value="1"/>
</dbReference>
<dbReference type="FunFam" id="2.30.22.10:FF:000001">
    <property type="entry name" value="Protein GrpE"/>
    <property type="match status" value="1"/>
</dbReference>
<dbReference type="Gene3D" id="3.90.20.20">
    <property type="match status" value="1"/>
</dbReference>
<dbReference type="Gene3D" id="2.30.22.10">
    <property type="entry name" value="Head domain of nucleotide exchange factor GrpE"/>
    <property type="match status" value="1"/>
</dbReference>
<dbReference type="HAMAP" id="MF_01151">
    <property type="entry name" value="GrpE"/>
    <property type="match status" value="1"/>
</dbReference>
<dbReference type="InterPro" id="IPR000740">
    <property type="entry name" value="GrpE"/>
</dbReference>
<dbReference type="InterPro" id="IPR013805">
    <property type="entry name" value="GrpE_coiled_coil"/>
</dbReference>
<dbReference type="InterPro" id="IPR009012">
    <property type="entry name" value="GrpE_head"/>
</dbReference>
<dbReference type="PANTHER" id="PTHR21237">
    <property type="entry name" value="GRPE PROTEIN"/>
    <property type="match status" value="1"/>
</dbReference>
<dbReference type="PANTHER" id="PTHR21237:SF23">
    <property type="entry name" value="GRPE PROTEIN HOMOLOG, MITOCHONDRIAL"/>
    <property type="match status" value="1"/>
</dbReference>
<dbReference type="Pfam" id="PF01025">
    <property type="entry name" value="GrpE"/>
    <property type="match status" value="1"/>
</dbReference>
<dbReference type="PRINTS" id="PR00773">
    <property type="entry name" value="GRPEPROTEIN"/>
</dbReference>
<dbReference type="SUPFAM" id="SSF58014">
    <property type="entry name" value="Coiled-coil domain of nucleotide exchange factor GrpE"/>
    <property type="match status" value="1"/>
</dbReference>
<dbReference type="SUPFAM" id="SSF51064">
    <property type="entry name" value="Head domain of nucleotide exchange factor GrpE"/>
    <property type="match status" value="1"/>
</dbReference>
<dbReference type="PROSITE" id="PS01071">
    <property type="entry name" value="GRPE"/>
    <property type="match status" value="1"/>
</dbReference>
<protein>
    <recommendedName>
        <fullName evidence="1">Protein GrpE</fullName>
    </recommendedName>
    <alternativeName>
        <fullName evidence="1">HSP-70 cofactor</fullName>
    </alternativeName>
</protein>
<comment type="function">
    <text evidence="1">Participates actively in the response to hyperosmotic and heat shock by preventing the aggregation of stress-denatured proteins, in association with DnaK and GrpE. It is the nucleotide exchange factor for DnaK and may function as a thermosensor. Unfolded proteins bind initially to DnaJ; upon interaction with the DnaJ-bound protein, DnaK hydrolyzes its bound ATP, resulting in the formation of a stable complex. GrpE releases ADP from DnaK; ATP binding to DnaK triggers the release of the substrate protein, thus completing the reaction cycle. Several rounds of ATP-dependent interactions between DnaJ, DnaK and GrpE are required for fully efficient folding.</text>
</comment>
<comment type="subunit">
    <text evidence="1">Homodimer.</text>
</comment>
<comment type="subcellular location">
    <subcellularLocation>
        <location evidence="1">Cytoplasm</location>
    </subcellularLocation>
</comment>
<comment type="similarity">
    <text evidence="1">Belongs to the GrpE family.</text>
</comment>
<keyword id="KW-0143">Chaperone</keyword>
<keyword id="KW-0963">Cytoplasm</keyword>
<keyword id="KW-1185">Reference proteome</keyword>
<keyword id="KW-0346">Stress response</keyword>
<accession>O66745</accession>
<gene>
    <name evidence="1" type="primary">grpE</name>
    <name type="ordered locus">aq_433</name>
</gene>
<feature type="chain" id="PRO_0000113734" description="Protein GrpE">
    <location>
        <begin position="1"/>
        <end position="182"/>
    </location>
</feature>
<organism>
    <name type="scientific">Aquifex aeolicus (strain VF5)</name>
    <dbReference type="NCBI Taxonomy" id="224324"/>
    <lineage>
        <taxon>Bacteria</taxon>
        <taxon>Pseudomonadati</taxon>
        <taxon>Aquificota</taxon>
        <taxon>Aquificia</taxon>
        <taxon>Aquificales</taxon>
        <taxon>Aquificaceae</taxon>
        <taxon>Aquifex</taxon>
    </lineage>
</organism>
<evidence type="ECO:0000255" key="1">
    <source>
        <dbReference type="HAMAP-Rule" id="MF_01151"/>
    </source>
</evidence>
<proteinExistence type="inferred from homology"/>
<name>GRPE_AQUAE</name>
<reference key="1">
    <citation type="journal article" date="1998" name="Nature">
        <title>The complete genome of the hyperthermophilic bacterium Aquifex aeolicus.</title>
        <authorList>
            <person name="Deckert G."/>
            <person name="Warren P.V."/>
            <person name="Gaasterland T."/>
            <person name="Young W.G."/>
            <person name="Lenox A.L."/>
            <person name="Graham D.E."/>
            <person name="Overbeek R."/>
            <person name="Snead M.A."/>
            <person name="Keller M."/>
            <person name="Aujay M."/>
            <person name="Huber R."/>
            <person name="Feldman R.A."/>
            <person name="Short J.M."/>
            <person name="Olsen G.J."/>
            <person name="Swanson R.V."/>
        </authorList>
    </citation>
    <scope>NUCLEOTIDE SEQUENCE [LARGE SCALE GENOMIC DNA]</scope>
    <source>
        <strain>VF5</strain>
    </source>
</reference>